<dbReference type="EC" id="2.1.1.77" evidence="1"/>
<dbReference type="EMBL" id="CP000478">
    <property type="protein sequence ID" value="ABK18541.1"/>
    <property type="molecule type" value="Genomic_DNA"/>
</dbReference>
<dbReference type="RefSeq" id="WP_011699706.1">
    <property type="nucleotide sequence ID" value="NC_008554.1"/>
</dbReference>
<dbReference type="SMR" id="A0LM89"/>
<dbReference type="STRING" id="335543.Sfum_2864"/>
<dbReference type="KEGG" id="sfu:Sfum_2864"/>
<dbReference type="eggNOG" id="COG2518">
    <property type="taxonomic scope" value="Bacteria"/>
</dbReference>
<dbReference type="HOGENOM" id="CLU_055432_2_0_7"/>
<dbReference type="InParanoid" id="A0LM89"/>
<dbReference type="OrthoDB" id="9810066at2"/>
<dbReference type="Proteomes" id="UP000001784">
    <property type="component" value="Chromosome"/>
</dbReference>
<dbReference type="GO" id="GO:0005737">
    <property type="term" value="C:cytoplasm"/>
    <property type="evidence" value="ECO:0007669"/>
    <property type="project" value="UniProtKB-SubCell"/>
</dbReference>
<dbReference type="GO" id="GO:0004719">
    <property type="term" value="F:protein-L-isoaspartate (D-aspartate) O-methyltransferase activity"/>
    <property type="evidence" value="ECO:0007669"/>
    <property type="project" value="UniProtKB-UniRule"/>
</dbReference>
<dbReference type="GO" id="GO:0032259">
    <property type="term" value="P:methylation"/>
    <property type="evidence" value="ECO:0007669"/>
    <property type="project" value="UniProtKB-KW"/>
</dbReference>
<dbReference type="GO" id="GO:0036211">
    <property type="term" value="P:protein modification process"/>
    <property type="evidence" value="ECO:0007669"/>
    <property type="project" value="UniProtKB-UniRule"/>
</dbReference>
<dbReference type="GO" id="GO:0030091">
    <property type="term" value="P:protein repair"/>
    <property type="evidence" value="ECO:0007669"/>
    <property type="project" value="UniProtKB-UniRule"/>
</dbReference>
<dbReference type="CDD" id="cd02440">
    <property type="entry name" value="AdoMet_MTases"/>
    <property type="match status" value="1"/>
</dbReference>
<dbReference type="FunFam" id="3.40.50.150:FF:000010">
    <property type="entry name" value="Protein-L-isoaspartate O-methyltransferase"/>
    <property type="match status" value="1"/>
</dbReference>
<dbReference type="Gene3D" id="3.40.50.150">
    <property type="entry name" value="Vaccinia Virus protein VP39"/>
    <property type="match status" value="1"/>
</dbReference>
<dbReference type="HAMAP" id="MF_00090">
    <property type="entry name" value="PIMT"/>
    <property type="match status" value="1"/>
</dbReference>
<dbReference type="InterPro" id="IPR000682">
    <property type="entry name" value="PCMT"/>
</dbReference>
<dbReference type="InterPro" id="IPR029063">
    <property type="entry name" value="SAM-dependent_MTases_sf"/>
</dbReference>
<dbReference type="NCBIfam" id="TIGR00080">
    <property type="entry name" value="pimt"/>
    <property type="match status" value="1"/>
</dbReference>
<dbReference type="NCBIfam" id="NF001453">
    <property type="entry name" value="PRK00312.1"/>
    <property type="match status" value="1"/>
</dbReference>
<dbReference type="PANTHER" id="PTHR11579">
    <property type="entry name" value="PROTEIN-L-ISOASPARTATE O-METHYLTRANSFERASE"/>
    <property type="match status" value="1"/>
</dbReference>
<dbReference type="PANTHER" id="PTHR11579:SF0">
    <property type="entry name" value="PROTEIN-L-ISOASPARTATE(D-ASPARTATE) O-METHYLTRANSFERASE"/>
    <property type="match status" value="1"/>
</dbReference>
<dbReference type="Pfam" id="PF01135">
    <property type="entry name" value="PCMT"/>
    <property type="match status" value="1"/>
</dbReference>
<dbReference type="SUPFAM" id="SSF53335">
    <property type="entry name" value="S-adenosyl-L-methionine-dependent methyltransferases"/>
    <property type="match status" value="1"/>
</dbReference>
<dbReference type="PROSITE" id="PS01279">
    <property type="entry name" value="PCMT"/>
    <property type="match status" value="1"/>
</dbReference>
<protein>
    <recommendedName>
        <fullName evidence="1">Protein-L-isoaspartate O-methyltransferase 2</fullName>
        <ecNumber evidence="1">2.1.1.77</ecNumber>
    </recommendedName>
    <alternativeName>
        <fullName evidence="1">L-isoaspartyl protein carboxyl methyltransferase 2</fullName>
    </alternativeName>
    <alternativeName>
        <fullName evidence="1">Protein L-isoaspartyl methyltransferase 2</fullName>
    </alternativeName>
    <alternativeName>
        <fullName evidence="1">Protein-beta-aspartate methyltransferase 2</fullName>
        <shortName evidence="1">PIMT 2</shortName>
    </alternativeName>
</protein>
<proteinExistence type="inferred from homology"/>
<accession>A0LM89</accession>
<keyword id="KW-0963">Cytoplasm</keyword>
<keyword id="KW-0489">Methyltransferase</keyword>
<keyword id="KW-1185">Reference proteome</keyword>
<keyword id="KW-0949">S-adenosyl-L-methionine</keyword>
<keyword id="KW-0808">Transferase</keyword>
<evidence type="ECO:0000255" key="1">
    <source>
        <dbReference type="HAMAP-Rule" id="MF_00090"/>
    </source>
</evidence>
<reference key="1">
    <citation type="submission" date="2006-10" db="EMBL/GenBank/DDBJ databases">
        <title>Complete sequence of Syntrophobacter fumaroxidans MPOB.</title>
        <authorList>
            <consortium name="US DOE Joint Genome Institute"/>
            <person name="Copeland A."/>
            <person name="Lucas S."/>
            <person name="Lapidus A."/>
            <person name="Barry K."/>
            <person name="Detter J.C."/>
            <person name="Glavina del Rio T."/>
            <person name="Hammon N."/>
            <person name="Israni S."/>
            <person name="Pitluck S."/>
            <person name="Goltsman E.G."/>
            <person name="Martinez M."/>
            <person name="Schmutz J."/>
            <person name="Larimer F."/>
            <person name="Land M."/>
            <person name="Hauser L."/>
            <person name="Kyrpides N."/>
            <person name="Kim E."/>
            <person name="Boone D.R."/>
            <person name="Brockman F."/>
            <person name="Culley D."/>
            <person name="Ferry J."/>
            <person name="Gunsalus R."/>
            <person name="McInerney M.J."/>
            <person name="Morrison M."/>
            <person name="Plugge C."/>
            <person name="Rohlin L."/>
            <person name="Scholten J."/>
            <person name="Sieber J."/>
            <person name="Stams A.J.M."/>
            <person name="Worm P."/>
            <person name="Henstra A.M."/>
            <person name="Richardson P."/>
        </authorList>
    </citation>
    <scope>NUCLEOTIDE SEQUENCE [LARGE SCALE GENOMIC DNA]</scope>
    <source>
        <strain>DSM 10017 / MPOB</strain>
    </source>
</reference>
<sequence>MSRKSTGAFLVILLLSMAAGGAVGAADDPYGAARAKMVREIEEDARRTSERIGKTALDPRVMEIMARVPRHEFVPAAERAYAYENRPLPIGYGQTISQPYIVAVMTDLLKVGSESTVLEVGTGSGYQAAILAEFVRSVYSIEIIEALAETAAERLKRLGYDNVRVRTGDGYHGWKEHAPFDGIVVTAAAGHIPPPLLDQLKPGGRMIIPVGGPFFVQQLMLVEKDEQGRTRTRQILPVAFVPLTGGH</sequence>
<comment type="function">
    <text evidence="1">Catalyzes the methyl esterification of L-isoaspartyl residues in peptides and proteins that result from spontaneous decomposition of normal L-aspartyl and L-asparaginyl residues. It plays a role in the repair and/or degradation of damaged proteins.</text>
</comment>
<comment type="catalytic activity">
    <reaction evidence="1">
        <text>[protein]-L-isoaspartate + S-adenosyl-L-methionine = [protein]-L-isoaspartate alpha-methyl ester + S-adenosyl-L-homocysteine</text>
        <dbReference type="Rhea" id="RHEA:12705"/>
        <dbReference type="Rhea" id="RHEA-COMP:12143"/>
        <dbReference type="Rhea" id="RHEA-COMP:12144"/>
        <dbReference type="ChEBI" id="CHEBI:57856"/>
        <dbReference type="ChEBI" id="CHEBI:59789"/>
        <dbReference type="ChEBI" id="CHEBI:90596"/>
        <dbReference type="ChEBI" id="CHEBI:90598"/>
        <dbReference type="EC" id="2.1.1.77"/>
    </reaction>
</comment>
<comment type="subcellular location">
    <subcellularLocation>
        <location evidence="1">Cytoplasm</location>
    </subcellularLocation>
</comment>
<comment type="similarity">
    <text evidence="1">Belongs to the methyltransferase superfamily. L-isoaspartyl/D-aspartyl protein methyltransferase family.</text>
</comment>
<feature type="chain" id="PRO_0000351945" description="Protein-L-isoaspartate O-methyltransferase 2">
    <location>
        <begin position="1"/>
        <end position="247"/>
    </location>
</feature>
<feature type="active site" evidence="1">
    <location>
        <position position="97"/>
    </location>
</feature>
<organism>
    <name type="scientific">Syntrophobacter fumaroxidans (strain DSM 10017 / MPOB)</name>
    <dbReference type="NCBI Taxonomy" id="335543"/>
    <lineage>
        <taxon>Bacteria</taxon>
        <taxon>Pseudomonadati</taxon>
        <taxon>Thermodesulfobacteriota</taxon>
        <taxon>Syntrophobacteria</taxon>
        <taxon>Syntrophobacterales</taxon>
        <taxon>Syntrophobacteraceae</taxon>
        <taxon>Syntrophobacter</taxon>
    </lineage>
</organism>
<name>PIMT2_SYNFM</name>
<gene>
    <name evidence="1" type="primary">pcm2</name>
    <name type="ordered locus">Sfum_2864</name>
</gene>